<organism>
    <name type="scientific">Escherichia coli (strain K12)</name>
    <dbReference type="NCBI Taxonomy" id="83333"/>
    <lineage>
        <taxon>Bacteria</taxon>
        <taxon>Pseudomonadati</taxon>
        <taxon>Pseudomonadota</taxon>
        <taxon>Gammaproteobacteria</taxon>
        <taxon>Enterobacterales</taxon>
        <taxon>Enterobacteriaceae</taxon>
        <taxon>Escherichia</taxon>
    </lineage>
</organism>
<name>YUBH_ECOLI</name>
<geneLocation type="plasmid">
    <name>F</name>
</geneLocation>
<proteinExistence type="inferred from homology"/>
<comment type="sequence caution" evidence="3">
    <conflict type="frameshift">
        <sequence resource="EMBL-CDS" id="BAA97926"/>
    </conflict>
</comment>
<gene>
    <name type="primary">yubH</name>
    <name type="synonym">yfgA</name>
    <name type="ordered locus">ECOK12F056</name>
</gene>
<protein>
    <recommendedName>
        <fullName>Uncharacterized protein YubH</fullName>
    </recommendedName>
</protein>
<accession>Q9JMR5</accession>
<sequence>MCCVYRMNRPASGLTVVFCGKLSGKPGPKSAAWRMPWQKSGADDGGENPRFFSAGPRTEHKGSRRRLRFTRPCAWPCGFSVMWPPCRVRAVPCLHLSRAGGDARVRFAAAVTRSLLPVCRDFPVVHPLRFRGLTLQLPSAVCVRLRLPLRPVHPRLIARLLWRHGTARCRGICE</sequence>
<feature type="signal peptide" evidence="1">
    <location>
        <begin position="1"/>
        <end position="31"/>
    </location>
</feature>
<feature type="chain" id="PRO_0000267227" description="Uncharacterized protein YubH">
    <location>
        <begin position="32"/>
        <end position="174"/>
    </location>
</feature>
<feature type="region of interest" description="Disordered" evidence="2">
    <location>
        <begin position="39"/>
        <end position="59"/>
    </location>
</feature>
<keyword id="KW-0614">Plasmid</keyword>
<keyword id="KW-0732">Signal</keyword>
<reference key="1">
    <citation type="submission" date="2000-04" db="EMBL/GenBank/DDBJ databases">
        <title>Complete nucleotide sequence of the F plasmid: its implications for organization and diversification of plasmid genomes.</title>
        <authorList>
            <person name="Shimizu H."/>
            <person name="Saitoh Y."/>
            <person name="Suda Y."/>
            <person name="Uehara K."/>
            <person name="Sampei G."/>
            <person name="Mizobuchi K."/>
        </authorList>
    </citation>
    <scope>NUCLEOTIDE SEQUENCE [LARGE SCALE GENOMIC DNA]</scope>
    <source>
        <strain>K12 / CR63</strain>
    </source>
</reference>
<dbReference type="EMBL" id="AP001918">
    <property type="protein sequence ID" value="BAA97926.1"/>
    <property type="status" value="ALT_FRAME"/>
    <property type="molecule type" value="Genomic_DNA"/>
</dbReference>
<dbReference type="RefSeq" id="NP_061435.1">
    <property type="nucleotide sequence ID" value="NC_002483.1"/>
</dbReference>
<dbReference type="AntiFam" id="ANF00259">
    <property type="entry name" value="Protein of unknown function (DUF1472)"/>
</dbReference>
<evidence type="ECO:0000255" key="1"/>
<evidence type="ECO:0000256" key="2">
    <source>
        <dbReference type="SAM" id="MobiDB-lite"/>
    </source>
</evidence>
<evidence type="ECO:0000305" key="3"/>